<dbReference type="EC" id="2.5.1.-" evidence="1"/>
<dbReference type="EMBL" id="BA000039">
    <property type="protein sequence ID" value="BAC09315.1"/>
    <property type="molecule type" value="Genomic_DNA"/>
</dbReference>
<dbReference type="RefSeq" id="NP_682553.1">
    <property type="nucleotide sequence ID" value="NC_004113.1"/>
</dbReference>
<dbReference type="SMR" id="Q8DI29"/>
<dbReference type="STRING" id="197221.gene:10748368"/>
<dbReference type="EnsemblBacteria" id="BAC09315">
    <property type="protein sequence ID" value="BAC09315"/>
    <property type="gene ID" value="BAC09315"/>
</dbReference>
<dbReference type="KEGG" id="tel:tlr1763"/>
<dbReference type="PATRIC" id="fig|197221.4.peg.1844"/>
<dbReference type="eggNOG" id="COG0020">
    <property type="taxonomic scope" value="Bacteria"/>
</dbReference>
<dbReference type="Proteomes" id="UP000000440">
    <property type="component" value="Chromosome"/>
</dbReference>
<dbReference type="GO" id="GO:0045547">
    <property type="term" value="F:ditrans,polycis-polyprenyl diphosphate synthase [(2E,6E)-farnesyl diphosphate specific] activity"/>
    <property type="evidence" value="ECO:0007669"/>
    <property type="project" value="TreeGrafter"/>
</dbReference>
<dbReference type="GO" id="GO:0000287">
    <property type="term" value="F:magnesium ion binding"/>
    <property type="evidence" value="ECO:0007669"/>
    <property type="project" value="UniProtKB-UniRule"/>
</dbReference>
<dbReference type="GO" id="GO:0016094">
    <property type="term" value="P:polyprenol biosynthetic process"/>
    <property type="evidence" value="ECO:0007669"/>
    <property type="project" value="TreeGrafter"/>
</dbReference>
<dbReference type="CDD" id="cd00475">
    <property type="entry name" value="Cis_IPPS"/>
    <property type="match status" value="1"/>
</dbReference>
<dbReference type="FunFam" id="3.40.1180.10:FF:000001">
    <property type="entry name" value="(2E,6E)-farnesyl-diphosphate-specific ditrans,polycis-undecaprenyl-diphosphate synthase"/>
    <property type="match status" value="1"/>
</dbReference>
<dbReference type="Gene3D" id="3.40.1180.10">
    <property type="entry name" value="Decaprenyl diphosphate synthase-like"/>
    <property type="match status" value="1"/>
</dbReference>
<dbReference type="HAMAP" id="MF_01139">
    <property type="entry name" value="ISPT"/>
    <property type="match status" value="1"/>
</dbReference>
<dbReference type="InterPro" id="IPR001441">
    <property type="entry name" value="UPP_synth-like"/>
</dbReference>
<dbReference type="InterPro" id="IPR018520">
    <property type="entry name" value="UPP_synth-like_CS"/>
</dbReference>
<dbReference type="InterPro" id="IPR036424">
    <property type="entry name" value="UPP_synth-like_sf"/>
</dbReference>
<dbReference type="NCBIfam" id="NF011405">
    <property type="entry name" value="PRK14830.1"/>
    <property type="match status" value="1"/>
</dbReference>
<dbReference type="NCBIfam" id="NF011406">
    <property type="entry name" value="PRK14831.1"/>
    <property type="match status" value="1"/>
</dbReference>
<dbReference type="NCBIfam" id="TIGR00055">
    <property type="entry name" value="uppS"/>
    <property type="match status" value="1"/>
</dbReference>
<dbReference type="PANTHER" id="PTHR10291:SF0">
    <property type="entry name" value="DEHYDRODOLICHYL DIPHOSPHATE SYNTHASE 2"/>
    <property type="match status" value="1"/>
</dbReference>
<dbReference type="PANTHER" id="PTHR10291">
    <property type="entry name" value="DEHYDRODOLICHYL DIPHOSPHATE SYNTHASE FAMILY MEMBER"/>
    <property type="match status" value="1"/>
</dbReference>
<dbReference type="Pfam" id="PF01255">
    <property type="entry name" value="Prenyltransf"/>
    <property type="match status" value="1"/>
</dbReference>
<dbReference type="SUPFAM" id="SSF64005">
    <property type="entry name" value="Undecaprenyl diphosphate synthase"/>
    <property type="match status" value="1"/>
</dbReference>
<dbReference type="PROSITE" id="PS01066">
    <property type="entry name" value="UPP_SYNTHASE"/>
    <property type="match status" value="1"/>
</dbReference>
<sequence>MSMTLQPHSLIELPADLDRDRLPRHVAVIMDGNGRWAKQRNLPRIMGHQRGVDTLKDLLRCCKDWGIEALTAYAFSTENWGRPLPEVEFLMTLFEQVLRRELGEMVAEGVQIHFVGDLTCLPKSLQAEIERAVAATANNQKIKFVVATNYGGRREIIHACRSIAAQVKAGLLDPADIDEVLFERHLYTGGLPDPDLLIRTSGELRISNFFLWQVAYAEIYVTKTLWPDFDRSAFHEALRDYQQRQRRFGRV</sequence>
<name>ISPT_THEVB</name>
<accession>Q8DI29</accession>
<gene>
    <name evidence="1" type="primary">uppS</name>
    <name type="ordered locus">tlr1763</name>
</gene>
<reference key="1">
    <citation type="journal article" date="2002" name="DNA Res.">
        <title>Complete genome structure of the thermophilic cyanobacterium Thermosynechococcus elongatus BP-1.</title>
        <authorList>
            <person name="Nakamura Y."/>
            <person name="Kaneko T."/>
            <person name="Sato S."/>
            <person name="Ikeuchi M."/>
            <person name="Katoh H."/>
            <person name="Sasamoto S."/>
            <person name="Watanabe A."/>
            <person name="Iriguchi M."/>
            <person name="Kawashima K."/>
            <person name="Kimura T."/>
            <person name="Kishida Y."/>
            <person name="Kiyokawa C."/>
            <person name="Kohara M."/>
            <person name="Matsumoto M."/>
            <person name="Matsuno A."/>
            <person name="Nakazaki N."/>
            <person name="Shimpo S."/>
            <person name="Sugimoto M."/>
            <person name="Takeuchi C."/>
            <person name="Yamada M."/>
            <person name="Tabata S."/>
        </authorList>
    </citation>
    <scope>NUCLEOTIDE SEQUENCE [LARGE SCALE GENOMIC DNA]</scope>
    <source>
        <strain>NIES-2133 / IAM M-273 / BP-1</strain>
    </source>
</reference>
<proteinExistence type="inferred from homology"/>
<feature type="chain" id="PRO_0000123698" description="Isoprenyl transferase">
    <location>
        <begin position="1"/>
        <end position="251"/>
    </location>
</feature>
<feature type="active site" evidence="1">
    <location>
        <position position="31"/>
    </location>
</feature>
<feature type="active site" description="Proton acceptor" evidence="1">
    <location>
        <position position="79"/>
    </location>
</feature>
<feature type="binding site" evidence="1">
    <location>
        <position position="31"/>
    </location>
    <ligand>
        <name>Mg(2+)</name>
        <dbReference type="ChEBI" id="CHEBI:18420"/>
    </ligand>
</feature>
<feature type="binding site" evidence="1">
    <location>
        <begin position="32"/>
        <end position="35"/>
    </location>
    <ligand>
        <name>substrate</name>
    </ligand>
</feature>
<feature type="binding site" evidence="1">
    <location>
        <position position="36"/>
    </location>
    <ligand>
        <name>substrate</name>
    </ligand>
</feature>
<feature type="binding site" evidence="1">
    <location>
        <position position="44"/>
    </location>
    <ligand>
        <name>substrate</name>
    </ligand>
</feature>
<feature type="binding site" evidence="1">
    <location>
        <position position="48"/>
    </location>
    <ligand>
        <name>substrate</name>
    </ligand>
</feature>
<feature type="binding site" evidence="1">
    <location>
        <begin position="76"/>
        <end position="78"/>
    </location>
    <ligand>
        <name>substrate</name>
    </ligand>
</feature>
<feature type="binding site" evidence="1">
    <location>
        <position position="80"/>
    </location>
    <ligand>
        <name>substrate</name>
    </ligand>
</feature>
<feature type="binding site" evidence="1">
    <location>
        <position position="82"/>
    </location>
    <ligand>
        <name>substrate</name>
    </ligand>
</feature>
<feature type="binding site" evidence="1">
    <location>
        <position position="199"/>
    </location>
    <ligand>
        <name>substrate</name>
    </ligand>
</feature>
<feature type="binding site" evidence="1">
    <location>
        <begin position="205"/>
        <end position="207"/>
    </location>
    <ligand>
        <name>substrate</name>
    </ligand>
</feature>
<feature type="binding site" evidence="1">
    <location>
        <position position="218"/>
    </location>
    <ligand>
        <name>Mg(2+)</name>
        <dbReference type="ChEBI" id="CHEBI:18420"/>
    </ligand>
</feature>
<comment type="function">
    <text evidence="1">Catalyzes the condensation of isopentenyl diphosphate (IPP) with allylic pyrophosphates generating different type of terpenoids.</text>
</comment>
<comment type="cofactor">
    <cofactor evidence="1">
        <name>Mg(2+)</name>
        <dbReference type="ChEBI" id="CHEBI:18420"/>
    </cofactor>
    <text evidence="1">Binds 2 magnesium ions per subunit.</text>
</comment>
<comment type="subunit">
    <text evidence="1">Homodimer.</text>
</comment>
<comment type="similarity">
    <text evidence="1">Belongs to the UPP synthase family.</text>
</comment>
<evidence type="ECO:0000255" key="1">
    <source>
        <dbReference type="HAMAP-Rule" id="MF_01139"/>
    </source>
</evidence>
<protein>
    <recommendedName>
        <fullName evidence="1">Isoprenyl transferase</fullName>
        <ecNumber evidence="1">2.5.1.-</ecNumber>
    </recommendedName>
</protein>
<keyword id="KW-0460">Magnesium</keyword>
<keyword id="KW-0479">Metal-binding</keyword>
<keyword id="KW-1185">Reference proteome</keyword>
<keyword id="KW-0808">Transferase</keyword>
<organism>
    <name type="scientific">Thermosynechococcus vestitus (strain NIES-2133 / IAM M-273 / BP-1)</name>
    <dbReference type="NCBI Taxonomy" id="197221"/>
    <lineage>
        <taxon>Bacteria</taxon>
        <taxon>Bacillati</taxon>
        <taxon>Cyanobacteriota</taxon>
        <taxon>Cyanophyceae</taxon>
        <taxon>Acaryochloridales</taxon>
        <taxon>Thermosynechococcaceae</taxon>
        <taxon>Thermosynechococcus</taxon>
    </lineage>
</organism>